<accession>Q96319</accession>
<accession>Q9LEV8</accession>
<dbReference type="EMBL" id="U67398">
    <property type="protein sequence ID" value="AAC49667.1"/>
    <property type="molecule type" value="mRNA"/>
</dbReference>
<dbReference type="EMBL" id="AL365234">
    <property type="protein sequence ID" value="CAB96836.1"/>
    <property type="status" value="ALT_SEQ"/>
    <property type="molecule type" value="Genomic_DNA"/>
</dbReference>
<dbReference type="EMBL" id="CP002688">
    <property type="protein sequence ID" value="AED91599.1"/>
    <property type="molecule type" value="Genomic_DNA"/>
</dbReference>
<dbReference type="EMBL" id="BT005033">
    <property type="protein sequence ID" value="AAO50566.1"/>
    <property type="molecule type" value="mRNA"/>
</dbReference>
<dbReference type="PIR" id="T50790">
    <property type="entry name" value="T50790"/>
</dbReference>
<dbReference type="SMR" id="Q96319"/>
<dbReference type="BioGRID" id="16226">
    <property type="interactions" value="3"/>
</dbReference>
<dbReference type="FunCoup" id="Q96319">
    <property type="interactions" value="3742"/>
</dbReference>
<dbReference type="IntAct" id="Q96319">
    <property type="interactions" value="2"/>
</dbReference>
<dbReference type="STRING" id="3702.Q96319"/>
<dbReference type="iPTMnet" id="Q96319"/>
<dbReference type="PaxDb" id="3702-AT5G10810.1"/>
<dbReference type="ProteomicsDB" id="220692"/>
<dbReference type="EnsemblPlants" id="AT5G10810.1">
    <property type="protein sequence ID" value="AT5G10810.1"/>
    <property type="gene ID" value="AT5G10810"/>
</dbReference>
<dbReference type="GeneID" id="830948"/>
<dbReference type="Gramene" id="AT5G10810.1">
    <property type="protein sequence ID" value="AT5G10810.1"/>
    <property type="gene ID" value="AT5G10810"/>
</dbReference>
<dbReference type="KEGG" id="ath:AT5G10810"/>
<dbReference type="Araport" id="AT5G10810"/>
<dbReference type="TAIR" id="AT5G10810">
    <property type="gene designation" value="ER"/>
</dbReference>
<dbReference type="eggNOG" id="KOG1766">
    <property type="taxonomic scope" value="Eukaryota"/>
</dbReference>
<dbReference type="HOGENOM" id="CLU_125703_0_1_1"/>
<dbReference type="InParanoid" id="Q96319"/>
<dbReference type="OMA" id="VPHNKQY"/>
<dbReference type="OrthoDB" id="7887808at2759"/>
<dbReference type="PhylomeDB" id="Q96319"/>
<dbReference type="CD-CODE" id="4299E36E">
    <property type="entry name" value="Nucleolus"/>
</dbReference>
<dbReference type="PRO" id="PR:Q96319"/>
<dbReference type="Proteomes" id="UP000006548">
    <property type="component" value="Chromosome 5"/>
</dbReference>
<dbReference type="ExpressionAtlas" id="Q96319">
    <property type="expression patterns" value="baseline and differential"/>
</dbReference>
<dbReference type="Gene3D" id="3.30.2260.10">
    <property type="entry name" value="Enhancer of rudimentary"/>
    <property type="match status" value="1"/>
</dbReference>
<dbReference type="InterPro" id="IPR035912">
    <property type="entry name" value="EHR_sf"/>
</dbReference>
<dbReference type="InterPro" id="IPR000781">
    <property type="entry name" value="ERH"/>
</dbReference>
<dbReference type="PANTHER" id="PTHR12373">
    <property type="entry name" value="ENHANCER OF RUDIMENTARY ERH"/>
    <property type="match status" value="1"/>
</dbReference>
<dbReference type="PANTHER" id="PTHR12373:SF0">
    <property type="entry name" value="ENHANCER OF RUDIMENTARY HOMOLOG"/>
    <property type="match status" value="1"/>
</dbReference>
<dbReference type="Pfam" id="PF01133">
    <property type="entry name" value="ER"/>
    <property type="match status" value="1"/>
</dbReference>
<dbReference type="PIRSF" id="PIRSF016393">
    <property type="entry name" value="Enh_rudimentary"/>
    <property type="match status" value="1"/>
</dbReference>
<dbReference type="SUPFAM" id="SSF143875">
    <property type="entry name" value="ERH-like"/>
    <property type="match status" value="1"/>
</dbReference>
<dbReference type="PROSITE" id="PS01290">
    <property type="entry name" value="ER"/>
    <property type="match status" value="1"/>
</dbReference>
<organism>
    <name type="scientific">Arabidopsis thaliana</name>
    <name type="common">Mouse-ear cress</name>
    <dbReference type="NCBI Taxonomy" id="3702"/>
    <lineage>
        <taxon>Eukaryota</taxon>
        <taxon>Viridiplantae</taxon>
        <taxon>Streptophyta</taxon>
        <taxon>Embryophyta</taxon>
        <taxon>Tracheophyta</taxon>
        <taxon>Spermatophyta</taxon>
        <taxon>Magnoliopsida</taxon>
        <taxon>eudicotyledons</taxon>
        <taxon>Gunneridae</taxon>
        <taxon>Pentapetalae</taxon>
        <taxon>rosids</taxon>
        <taxon>malvids</taxon>
        <taxon>Brassicales</taxon>
        <taxon>Brassicaceae</taxon>
        <taxon>Camelineae</taxon>
        <taxon>Arabidopsis</taxon>
    </lineage>
</organism>
<evidence type="ECO:0000250" key="1"/>
<evidence type="ECO:0000305" key="2"/>
<gene>
    <name type="ordered locus">At5g10810</name>
    <name type="ORF">T30N20_80</name>
</gene>
<keyword id="KW-0131">Cell cycle</keyword>
<keyword id="KW-1185">Reference proteome</keyword>
<reference key="1">
    <citation type="journal article" date="1997" name="Gene">
        <title>The putative cell cycle gene, enhancer of rudimentary, encodes a highly conserved protein found in plants and animals.</title>
        <authorList>
            <person name="Gelsthorpe M."/>
            <person name="Pulumati M."/>
            <person name="McCallum C."/>
            <person name="Dang-Vu K."/>
            <person name="Tsubota S.I."/>
        </authorList>
    </citation>
    <scope>NUCLEOTIDE SEQUENCE [MRNA]</scope>
</reference>
<reference key="2">
    <citation type="journal article" date="2000" name="Nature">
        <title>Sequence and analysis of chromosome 5 of the plant Arabidopsis thaliana.</title>
        <authorList>
            <person name="Tabata S."/>
            <person name="Kaneko T."/>
            <person name="Nakamura Y."/>
            <person name="Kotani H."/>
            <person name="Kato T."/>
            <person name="Asamizu E."/>
            <person name="Miyajima N."/>
            <person name="Sasamoto S."/>
            <person name="Kimura T."/>
            <person name="Hosouchi T."/>
            <person name="Kawashima K."/>
            <person name="Kohara M."/>
            <person name="Matsumoto M."/>
            <person name="Matsuno A."/>
            <person name="Muraki A."/>
            <person name="Nakayama S."/>
            <person name="Nakazaki N."/>
            <person name="Naruo K."/>
            <person name="Okumura S."/>
            <person name="Shinpo S."/>
            <person name="Takeuchi C."/>
            <person name="Wada T."/>
            <person name="Watanabe A."/>
            <person name="Yamada M."/>
            <person name="Yasuda M."/>
            <person name="Sato S."/>
            <person name="de la Bastide M."/>
            <person name="Huang E."/>
            <person name="Spiegel L."/>
            <person name="Gnoj L."/>
            <person name="O'Shaughnessy A."/>
            <person name="Preston R."/>
            <person name="Habermann K."/>
            <person name="Murray J."/>
            <person name="Johnson D."/>
            <person name="Rohlfing T."/>
            <person name="Nelson J."/>
            <person name="Stoneking T."/>
            <person name="Pepin K."/>
            <person name="Spieth J."/>
            <person name="Sekhon M."/>
            <person name="Armstrong J."/>
            <person name="Becker M."/>
            <person name="Belter E."/>
            <person name="Cordum H."/>
            <person name="Cordes M."/>
            <person name="Courtney L."/>
            <person name="Courtney W."/>
            <person name="Dante M."/>
            <person name="Du H."/>
            <person name="Edwards J."/>
            <person name="Fryman J."/>
            <person name="Haakensen B."/>
            <person name="Lamar E."/>
            <person name="Latreille P."/>
            <person name="Leonard S."/>
            <person name="Meyer R."/>
            <person name="Mulvaney E."/>
            <person name="Ozersky P."/>
            <person name="Riley A."/>
            <person name="Strowmatt C."/>
            <person name="Wagner-McPherson C."/>
            <person name="Wollam A."/>
            <person name="Yoakum M."/>
            <person name="Bell M."/>
            <person name="Dedhia N."/>
            <person name="Parnell L."/>
            <person name="Shah R."/>
            <person name="Rodriguez M."/>
            <person name="Hoon See L."/>
            <person name="Vil D."/>
            <person name="Baker J."/>
            <person name="Kirchoff K."/>
            <person name="Toth K."/>
            <person name="King L."/>
            <person name="Bahret A."/>
            <person name="Miller B."/>
            <person name="Marra M.A."/>
            <person name="Martienssen R."/>
            <person name="McCombie W.R."/>
            <person name="Wilson R.K."/>
            <person name="Murphy G."/>
            <person name="Bancroft I."/>
            <person name="Volckaert G."/>
            <person name="Wambutt R."/>
            <person name="Duesterhoeft A."/>
            <person name="Stiekema W."/>
            <person name="Pohl T."/>
            <person name="Entian K.-D."/>
            <person name="Terryn N."/>
            <person name="Hartley N."/>
            <person name="Bent E."/>
            <person name="Johnson S."/>
            <person name="Langham S.-A."/>
            <person name="McCullagh B."/>
            <person name="Robben J."/>
            <person name="Grymonprez B."/>
            <person name="Zimmermann W."/>
            <person name="Ramsperger U."/>
            <person name="Wedler H."/>
            <person name="Balke K."/>
            <person name="Wedler E."/>
            <person name="Peters S."/>
            <person name="van Staveren M."/>
            <person name="Dirkse W."/>
            <person name="Mooijman P."/>
            <person name="Klein Lankhorst R."/>
            <person name="Weitzenegger T."/>
            <person name="Bothe G."/>
            <person name="Rose M."/>
            <person name="Hauf J."/>
            <person name="Berneiser S."/>
            <person name="Hempel S."/>
            <person name="Feldpausch M."/>
            <person name="Lamberth S."/>
            <person name="Villarroel R."/>
            <person name="Gielen J."/>
            <person name="Ardiles W."/>
            <person name="Bents O."/>
            <person name="Lemcke K."/>
            <person name="Kolesov G."/>
            <person name="Mayer K.F.X."/>
            <person name="Rudd S."/>
            <person name="Schoof H."/>
            <person name="Schueller C."/>
            <person name="Zaccaria P."/>
            <person name="Mewes H.-W."/>
            <person name="Bevan M."/>
            <person name="Fransz P.F."/>
        </authorList>
    </citation>
    <scope>NUCLEOTIDE SEQUENCE [LARGE SCALE GENOMIC DNA]</scope>
    <source>
        <strain>cv. Columbia</strain>
    </source>
</reference>
<reference key="3">
    <citation type="journal article" date="2017" name="Plant J.">
        <title>Araport11: a complete reannotation of the Arabidopsis thaliana reference genome.</title>
        <authorList>
            <person name="Cheng C.Y."/>
            <person name="Krishnakumar V."/>
            <person name="Chan A.P."/>
            <person name="Thibaud-Nissen F."/>
            <person name="Schobel S."/>
            <person name="Town C.D."/>
        </authorList>
    </citation>
    <scope>GENOME REANNOTATION</scope>
    <source>
        <strain>cv. Columbia</strain>
    </source>
</reference>
<reference key="4">
    <citation type="journal article" date="2003" name="Science">
        <title>Empirical analysis of transcriptional activity in the Arabidopsis genome.</title>
        <authorList>
            <person name="Yamada K."/>
            <person name="Lim J."/>
            <person name="Dale J.M."/>
            <person name="Chen H."/>
            <person name="Shinn P."/>
            <person name="Palm C.J."/>
            <person name="Southwick A.M."/>
            <person name="Wu H.C."/>
            <person name="Kim C.J."/>
            <person name="Nguyen M."/>
            <person name="Pham P.K."/>
            <person name="Cheuk R.F."/>
            <person name="Karlin-Newmann G."/>
            <person name="Liu S.X."/>
            <person name="Lam B."/>
            <person name="Sakano H."/>
            <person name="Wu T."/>
            <person name="Yu G."/>
            <person name="Miranda M."/>
            <person name="Quach H.L."/>
            <person name="Tripp M."/>
            <person name="Chang C.H."/>
            <person name="Lee J.M."/>
            <person name="Toriumi M.J."/>
            <person name="Chan M.M."/>
            <person name="Tang C.C."/>
            <person name="Onodera C.S."/>
            <person name="Deng J.M."/>
            <person name="Akiyama K."/>
            <person name="Ansari Y."/>
            <person name="Arakawa T."/>
            <person name="Banh J."/>
            <person name="Banno F."/>
            <person name="Bowser L."/>
            <person name="Brooks S.Y."/>
            <person name="Carninci P."/>
            <person name="Chao Q."/>
            <person name="Choy N."/>
            <person name="Enju A."/>
            <person name="Goldsmith A.D."/>
            <person name="Gurjal M."/>
            <person name="Hansen N.F."/>
            <person name="Hayashizaki Y."/>
            <person name="Johnson-Hopson C."/>
            <person name="Hsuan V.W."/>
            <person name="Iida K."/>
            <person name="Karnes M."/>
            <person name="Khan S."/>
            <person name="Koesema E."/>
            <person name="Ishida J."/>
            <person name="Jiang P.X."/>
            <person name="Jones T."/>
            <person name="Kawai J."/>
            <person name="Kamiya A."/>
            <person name="Meyers C."/>
            <person name="Nakajima M."/>
            <person name="Narusaka M."/>
            <person name="Seki M."/>
            <person name="Sakurai T."/>
            <person name="Satou M."/>
            <person name="Tamse R."/>
            <person name="Vaysberg M."/>
            <person name="Wallender E.K."/>
            <person name="Wong C."/>
            <person name="Yamamura Y."/>
            <person name="Yuan S."/>
            <person name="Shinozaki K."/>
            <person name="Davis R.W."/>
            <person name="Theologis A."/>
            <person name="Ecker J.R."/>
        </authorList>
    </citation>
    <scope>NUCLEOTIDE SEQUENCE [LARGE SCALE MRNA]</scope>
    <source>
        <strain>cv. Columbia</strain>
    </source>
</reference>
<name>ERH_ARATH</name>
<protein>
    <recommendedName>
        <fullName>Enhancer of rudimentary homolog</fullName>
    </recommendedName>
</protein>
<feature type="chain" id="PRO_0000219357" description="Enhancer of rudimentary homolog">
    <location>
        <begin position="1"/>
        <end position="109"/>
    </location>
</feature>
<proteinExistence type="inferred from homology"/>
<sequence>MANHNSSRHTIILLQNSPSRATRTFMDYDSIGQAMDGICGLYERKLKEINPSLRNISYDIADLYNFIDGLADLSALVYDHSISAYLPYDRQWIKQKAFHHLKRIANGGR</sequence>
<comment type="function">
    <text>May have a role in the cell cycle.</text>
</comment>
<comment type="subunit">
    <text evidence="1">Homodimer.</text>
</comment>
<comment type="similarity">
    <text evidence="2">Belongs to the E(R) family.</text>
</comment>
<comment type="sequence caution" evidence="2">
    <conflict type="erroneous gene model prediction">
        <sequence resource="EMBL-CDS" id="CAB96836"/>
    </conflict>
</comment>